<proteinExistence type="evidence at protein level"/>
<accession>Q8C9B9</accession>
<accession>A2AJ47</accession>
<accession>A2AJ48</accession>
<accession>B2RS46</accession>
<accession>Q05C59</accession>
<accession>Q3ZTP5</accession>
<accession>Q3ZTP6</accession>
<accession>Q4V9W1</accession>
<accession>Q6ZQD7</accession>
<accession>Q80V34</accession>
<accession>Q8BMD0</accession>
<accession>Q8BRG2</accession>
<accession>Q8CHR5</accession>
<accession>Q9WV00</accession>
<dbReference type="EMBL" id="AJ238332">
    <property type="protein sequence ID" value="CAB48401.1"/>
    <property type="molecule type" value="mRNA"/>
</dbReference>
<dbReference type="EMBL" id="AY425951">
    <property type="protein sequence ID" value="AAR84049.1"/>
    <property type="molecule type" value="mRNA"/>
</dbReference>
<dbReference type="EMBL" id="AY425952">
    <property type="protein sequence ID" value="AAR84050.1"/>
    <property type="molecule type" value="mRNA"/>
</dbReference>
<dbReference type="EMBL" id="AK129117">
    <property type="protein sequence ID" value="BAC97927.1"/>
    <property type="status" value="ALT_INIT"/>
    <property type="molecule type" value="mRNA"/>
</dbReference>
<dbReference type="EMBL" id="AK032843">
    <property type="protein sequence ID" value="BAC28053.1"/>
    <property type="status" value="ALT_INIT"/>
    <property type="molecule type" value="mRNA"/>
</dbReference>
<dbReference type="EMBL" id="AK042474">
    <property type="protein sequence ID" value="BAC31270.1"/>
    <property type="molecule type" value="mRNA"/>
</dbReference>
<dbReference type="EMBL" id="AK044919">
    <property type="protein sequence ID" value="BAC32141.1"/>
    <property type="molecule type" value="mRNA"/>
</dbReference>
<dbReference type="EMBL" id="AL732560">
    <property type="status" value="NOT_ANNOTATED_CDS"/>
    <property type="molecule type" value="Genomic_DNA"/>
</dbReference>
<dbReference type="EMBL" id="BC029110">
    <property type="protein sequence ID" value="AAH29110.1"/>
    <property type="molecule type" value="mRNA"/>
</dbReference>
<dbReference type="EMBL" id="BC044755">
    <property type="protein sequence ID" value="AAH44755.1"/>
    <property type="status" value="ALT_INIT"/>
    <property type="molecule type" value="mRNA"/>
</dbReference>
<dbReference type="EMBL" id="BC096662">
    <property type="protein sequence ID" value="AAH96662.1"/>
    <property type="molecule type" value="mRNA"/>
</dbReference>
<dbReference type="EMBL" id="BC138712">
    <property type="protein sequence ID" value="AAI38713.1"/>
    <property type="molecule type" value="mRNA"/>
</dbReference>
<dbReference type="EMBL" id="BC138713">
    <property type="protein sequence ID" value="AAI38714.1"/>
    <property type="molecule type" value="mRNA"/>
</dbReference>
<dbReference type="CCDS" id="CCDS17182.1">
    <molecule id="Q8C9B9-1"/>
</dbReference>
<dbReference type="CCDS" id="CCDS17183.1">
    <molecule id="Q8C9B9-3"/>
</dbReference>
<dbReference type="CCDS" id="CCDS17184.1">
    <molecule id="Q8C9B9-2"/>
</dbReference>
<dbReference type="RefSeq" id="NP_001278361.1">
    <molecule id="Q8C9B9-2"/>
    <property type="nucleotide sequence ID" value="NM_001291432.2"/>
</dbReference>
<dbReference type="RefSeq" id="NP_001278362.1">
    <molecule id="Q8C9B9-3"/>
    <property type="nucleotide sequence ID" value="NM_001291433.2"/>
</dbReference>
<dbReference type="RefSeq" id="NP_035935.2">
    <molecule id="Q8C9B9-2"/>
    <property type="nucleotide sequence ID" value="NM_011805.3"/>
</dbReference>
<dbReference type="RefSeq" id="NP_780760.2">
    <molecule id="Q8C9B9-1"/>
    <property type="nucleotide sequence ID" value="NM_175551.5"/>
</dbReference>
<dbReference type="RefSeq" id="NP_808520.2">
    <molecule id="Q8C9B9-3"/>
    <property type="nucleotide sequence ID" value="NM_177852.4"/>
</dbReference>
<dbReference type="RefSeq" id="XP_006500671.1">
    <molecule id="Q8C9B9-1"/>
    <property type="nucleotide sequence ID" value="XM_006500608.5"/>
</dbReference>
<dbReference type="RefSeq" id="XP_006500672.1">
    <molecule id="Q8C9B9-1"/>
    <property type="nucleotide sequence ID" value="XM_006500609.5"/>
</dbReference>
<dbReference type="RefSeq" id="XP_006500673.1">
    <molecule id="Q8C9B9-1"/>
    <property type="nucleotide sequence ID" value="XM_006500610.5"/>
</dbReference>
<dbReference type="RefSeq" id="XP_006500674.1">
    <molecule id="Q8C9B9-1"/>
    <property type="nucleotide sequence ID" value="XM_006500611.5"/>
</dbReference>
<dbReference type="RefSeq" id="XP_006500675.1">
    <molecule id="Q8C9B9-1"/>
    <property type="nucleotide sequence ID" value="XM_006500612.4"/>
</dbReference>
<dbReference type="RefSeq" id="XP_006500678.1">
    <molecule id="Q8C9B9-1"/>
    <property type="nucleotide sequence ID" value="XM_006500615.5"/>
</dbReference>
<dbReference type="RefSeq" id="XP_006500679.1">
    <molecule id="Q8C9B9-1"/>
    <property type="nucleotide sequence ID" value="XM_006500616.4"/>
</dbReference>
<dbReference type="PDB" id="1WEM">
    <property type="method" value="NMR"/>
    <property type="chains" value="A=257-319"/>
</dbReference>
<dbReference type="PDBsum" id="1WEM"/>
<dbReference type="BMRB" id="Q8C9B9"/>
<dbReference type="SMR" id="Q8C9B9"/>
<dbReference type="BioGRID" id="204761">
    <property type="interactions" value="8"/>
</dbReference>
<dbReference type="FunCoup" id="Q8C9B9">
    <property type="interactions" value="5086"/>
</dbReference>
<dbReference type="IntAct" id="Q8C9B9">
    <property type="interactions" value="4"/>
</dbReference>
<dbReference type="MINT" id="Q8C9B9"/>
<dbReference type="STRING" id="10090.ENSMUSP00000084794"/>
<dbReference type="GlyGen" id="Q8C9B9">
    <property type="glycosylation" value="16 sites, 2 N-linked glycans (2 sites), 1 O-linked glycan (12 sites)"/>
</dbReference>
<dbReference type="iPTMnet" id="Q8C9B9"/>
<dbReference type="PhosphoSitePlus" id="Q8C9B9"/>
<dbReference type="jPOST" id="Q8C9B9"/>
<dbReference type="PaxDb" id="10090-ENSMUSP00000084794"/>
<dbReference type="PeptideAtlas" id="Q8C9B9"/>
<dbReference type="ProteomicsDB" id="279662">
    <molecule id="Q8C9B9-1"/>
</dbReference>
<dbReference type="ProteomicsDB" id="279663">
    <molecule id="Q8C9B9-2"/>
</dbReference>
<dbReference type="ProteomicsDB" id="279664">
    <molecule id="Q8C9B9-3"/>
</dbReference>
<dbReference type="Pumba" id="Q8C9B9"/>
<dbReference type="Antibodypedia" id="3820">
    <property type="antibodies" value="267 antibodies from 37 providers"/>
</dbReference>
<dbReference type="DNASU" id="23856"/>
<dbReference type="Ensembl" id="ENSMUST00000087517.10">
    <molecule id="Q8C9B9-1"/>
    <property type="protein sequence ID" value="ENSMUSP00000084794.4"/>
    <property type="gene ID" value="ENSMUSG00000038914.16"/>
</dbReference>
<dbReference type="Ensembl" id="ENSMUST00000103055.8">
    <molecule id="Q8C9B9-2"/>
    <property type="protein sequence ID" value="ENSMUSP00000099344.2"/>
    <property type="gene ID" value="ENSMUSG00000038914.16"/>
</dbReference>
<dbReference type="Ensembl" id="ENSMUST00000103056.10">
    <molecule id="Q8C9B9-3"/>
    <property type="protein sequence ID" value="ENSMUSP00000099345.4"/>
    <property type="gene ID" value="ENSMUSG00000038914.16"/>
</dbReference>
<dbReference type="Ensembl" id="ENSMUST00000103057.8">
    <molecule id="Q8C9B9-3"/>
    <property type="protein sequence ID" value="ENSMUSP00000099346.2"/>
    <property type="gene ID" value="ENSMUSG00000038914.16"/>
</dbReference>
<dbReference type="Ensembl" id="ENSMUST00000130986.8">
    <molecule id="Q8C9B9-2"/>
    <property type="protein sequence ID" value="ENSMUSP00000119689.2"/>
    <property type="gene ID" value="ENSMUSG00000038914.16"/>
</dbReference>
<dbReference type="GeneID" id="23856"/>
<dbReference type="KEGG" id="mmu:23856"/>
<dbReference type="UCSC" id="uc008ojq.2">
    <molecule id="Q8C9B9-1"/>
    <property type="organism name" value="mouse"/>
</dbReference>
<dbReference type="UCSC" id="uc008ojr.2">
    <molecule id="Q8C9B9-3"/>
    <property type="organism name" value="mouse"/>
</dbReference>
<dbReference type="UCSC" id="uc008oju.2">
    <molecule id="Q8C9B9-2"/>
    <property type="organism name" value="mouse"/>
</dbReference>
<dbReference type="AGR" id="MGI:1344352"/>
<dbReference type="CTD" id="11083"/>
<dbReference type="MGI" id="MGI:1344352">
    <property type="gene designation" value="Dido1"/>
</dbReference>
<dbReference type="VEuPathDB" id="HostDB:ENSMUSG00000038914"/>
<dbReference type="eggNOG" id="KOG1632">
    <property type="taxonomic scope" value="Eukaryota"/>
</dbReference>
<dbReference type="eggNOG" id="KOG1634">
    <property type="taxonomic scope" value="Eukaryota"/>
</dbReference>
<dbReference type="GeneTree" id="ENSGT00940000155532"/>
<dbReference type="HOGENOM" id="CLU_000673_1_0_1"/>
<dbReference type="InParanoid" id="Q8C9B9"/>
<dbReference type="OMA" id="HPNQFDG"/>
<dbReference type="OrthoDB" id="1884872at2759"/>
<dbReference type="PhylomeDB" id="Q8C9B9"/>
<dbReference type="TreeFam" id="TF350578"/>
<dbReference type="BioGRID-ORCS" id="23856">
    <property type="hits" value="10 hits in 82 CRISPR screens"/>
</dbReference>
<dbReference type="ChiTaRS" id="Dido1">
    <property type="organism name" value="mouse"/>
</dbReference>
<dbReference type="EvolutionaryTrace" id="Q8C9B9"/>
<dbReference type="PRO" id="PR:Q8C9B9"/>
<dbReference type="Proteomes" id="UP000000589">
    <property type="component" value="Chromosome 2"/>
</dbReference>
<dbReference type="RNAct" id="Q8C9B9">
    <property type="molecule type" value="protein"/>
</dbReference>
<dbReference type="Bgee" id="ENSMUSG00000038914">
    <property type="expression patterns" value="Expressed in paneth cell and 263 other cell types or tissues"/>
</dbReference>
<dbReference type="ExpressionAtlas" id="Q8C9B9">
    <property type="expression patterns" value="baseline and differential"/>
</dbReference>
<dbReference type="GO" id="GO:0005737">
    <property type="term" value="C:cytoplasm"/>
    <property type="evidence" value="ECO:0000304"/>
    <property type="project" value="MGI"/>
</dbReference>
<dbReference type="GO" id="GO:0005654">
    <property type="term" value="C:nucleoplasm"/>
    <property type="evidence" value="ECO:0000304"/>
    <property type="project" value="Reactome"/>
</dbReference>
<dbReference type="GO" id="GO:0005634">
    <property type="term" value="C:nucleus"/>
    <property type="evidence" value="ECO:0000314"/>
    <property type="project" value="MGI"/>
</dbReference>
<dbReference type="GO" id="GO:0005819">
    <property type="term" value="C:spindle"/>
    <property type="evidence" value="ECO:0007669"/>
    <property type="project" value="UniProtKB-SubCell"/>
</dbReference>
<dbReference type="GO" id="GO:0008270">
    <property type="term" value="F:zinc ion binding"/>
    <property type="evidence" value="ECO:0007669"/>
    <property type="project" value="UniProtKB-KW"/>
</dbReference>
<dbReference type="GO" id="GO:0097190">
    <property type="term" value="P:apoptotic signaling pathway"/>
    <property type="evidence" value="ECO:0000314"/>
    <property type="project" value="MGI"/>
</dbReference>
<dbReference type="GO" id="GO:0006351">
    <property type="term" value="P:DNA-templated transcription"/>
    <property type="evidence" value="ECO:0007669"/>
    <property type="project" value="InterPro"/>
</dbReference>
<dbReference type="CDD" id="cd15639">
    <property type="entry name" value="PHD_DIDO1_like"/>
    <property type="match status" value="1"/>
</dbReference>
<dbReference type="CDD" id="cd21547">
    <property type="entry name" value="SPOC_DIDO1-like"/>
    <property type="match status" value="1"/>
</dbReference>
<dbReference type="FunFam" id="1.10.472.30:FF:000002">
    <property type="entry name" value="Death-inducer obliterator 1"/>
    <property type="match status" value="1"/>
</dbReference>
<dbReference type="FunFam" id="3.30.40.10:FF:000225">
    <property type="entry name" value="Death-inducer obliterator 1"/>
    <property type="match status" value="1"/>
</dbReference>
<dbReference type="Gene3D" id="1.10.472.30">
    <property type="entry name" value="Transcription elongation factor S-II, central domain"/>
    <property type="match status" value="1"/>
</dbReference>
<dbReference type="Gene3D" id="3.30.40.10">
    <property type="entry name" value="Zinc/RING finger domain, C3HC4 (zinc finger)"/>
    <property type="match status" value="1"/>
</dbReference>
<dbReference type="InterPro" id="IPR033082">
    <property type="entry name" value="DIDO1_PHD"/>
</dbReference>
<dbReference type="InterPro" id="IPR012921">
    <property type="entry name" value="SPOC_C"/>
</dbReference>
<dbReference type="InterPro" id="IPR003618">
    <property type="entry name" value="TFIIS_cen_dom"/>
</dbReference>
<dbReference type="InterPro" id="IPR036575">
    <property type="entry name" value="TFIIS_cen_dom_sf"/>
</dbReference>
<dbReference type="InterPro" id="IPR019786">
    <property type="entry name" value="Zinc_finger_PHD-type_CS"/>
</dbReference>
<dbReference type="InterPro" id="IPR011011">
    <property type="entry name" value="Znf_FYVE_PHD"/>
</dbReference>
<dbReference type="InterPro" id="IPR001965">
    <property type="entry name" value="Znf_PHD"/>
</dbReference>
<dbReference type="InterPro" id="IPR019787">
    <property type="entry name" value="Znf_PHD-finger"/>
</dbReference>
<dbReference type="InterPro" id="IPR013083">
    <property type="entry name" value="Znf_RING/FYVE/PHD"/>
</dbReference>
<dbReference type="PANTHER" id="PTHR11477:SF13">
    <property type="entry name" value="DEATH-INDUCER OBLITERATOR 1"/>
    <property type="match status" value="1"/>
</dbReference>
<dbReference type="PANTHER" id="PTHR11477">
    <property type="entry name" value="TRANSCRIPTION FACTOR S-II ZINC FINGER DOMAIN-CONTAINING PROTEIN"/>
    <property type="match status" value="1"/>
</dbReference>
<dbReference type="Pfam" id="PF00628">
    <property type="entry name" value="PHD"/>
    <property type="match status" value="1"/>
</dbReference>
<dbReference type="Pfam" id="PF07744">
    <property type="entry name" value="SPOC"/>
    <property type="match status" value="1"/>
</dbReference>
<dbReference type="Pfam" id="PF07500">
    <property type="entry name" value="TFIIS_M"/>
    <property type="match status" value="1"/>
</dbReference>
<dbReference type="SMART" id="SM00249">
    <property type="entry name" value="PHD"/>
    <property type="match status" value="1"/>
</dbReference>
<dbReference type="SMART" id="SM00510">
    <property type="entry name" value="TFS2M"/>
    <property type="match status" value="1"/>
</dbReference>
<dbReference type="SUPFAM" id="SSF46942">
    <property type="entry name" value="Elongation factor TFIIS domain 2"/>
    <property type="match status" value="1"/>
</dbReference>
<dbReference type="SUPFAM" id="SSF57903">
    <property type="entry name" value="FYVE/PHD zinc finger"/>
    <property type="match status" value="1"/>
</dbReference>
<dbReference type="PROSITE" id="PS51321">
    <property type="entry name" value="TFIIS_CENTRAL"/>
    <property type="match status" value="1"/>
</dbReference>
<dbReference type="PROSITE" id="PS01359">
    <property type="entry name" value="ZF_PHD_1"/>
    <property type="match status" value="1"/>
</dbReference>
<dbReference type="PROSITE" id="PS50016">
    <property type="entry name" value="ZF_PHD_2"/>
    <property type="match status" value="1"/>
</dbReference>
<protein>
    <recommendedName>
        <fullName>Death-inducer obliterator 1</fullName>
        <shortName>DIO-1</shortName>
    </recommendedName>
    <alternativeName>
        <fullName>Death-associated transcription factor 1</fullName>
        <shortName>DATF-1</shortName>
    </alternativeName>
</protein>
<comment type="function">
    <text evidence="1">Required for early embryonic stem cell development (By similarity). Putative transcription factor, weakly pro-apoptotic when overexpressed.</text>
</comment>
<comment type="subunit">
    <text evidence="1">Interacts specifically (via PHD-type zinc finger) with histone H3 that is trimethylated at 'Lys-4' (H3K4me3), histone phosphorylation at 'Thr-3' or 'Thr-6' disrupts this binding and promotes translocation of DIDO1 from chromatin to the mitotic spindle during mitosis.</text>
</comment>
<comment type="subcellular location">
    <subcellularLocation>
        <location>Cytoplasm</location>
    </subcellularLocation>
    <subcellularLocation>
        <location>Nucleus</location>
    </subcellularLocation>
    <subcellularLocation>
        <location evidence="1">Cytoplasm</location>
        <location evidence="1">Cytoskeleton</location>
        <location evidence="1">Spindle</location>
    </subcellularLocation>
    <text evidence="1">Translocates to the mitotic spindle upon loss of interaction with H3K4me3 during early mitosis (By similarity). Translocates to the nucleus after pro-apoptotic stimuli.</text>
</comment>
<comment type="alternative products">
    <event type="alternative splicing"/>
    <isoform>
        <id>Q8C9B9-1</id>
        <name>1</name>
        <name>Dido3</name>
        <sequence type="displayed"/>
    </isoform>
    <isoform>
        <id>Q8C9B9-2</id>
        <name>2</name>
        <name>Dido1</name>
        <sequence type="described" ref="VSP_012363 VSP_012364"/>
    </isoform>
    <isoform>
        <id>Q8C9B9-3</id>
        <name>3</name>
        <name>Dido2</name>
        <sequence type="described" ref="VSP_026606 VSP_026607"/>
    </isoform>
</comment>
<comment type="tissue specificity">
    <text>Ubiquitous. Expressed at intermediate levels.</text>
</comment>
<comment type="induction">
    <text>Up-regulated during apoptosis.</text>
</comment>
<comment type="domain">
    <text evidence="1">The PHD-type zinc finger forms an aromatic cage around H3K4me3.</text>
</comment>
<comment type="sequence caution" evidence="12">
    <conflict type="erroneous initiation">
        <sequence resource="EMBL-CDS" id="AAH44755"/>
    </conflict>
</comment>
<comment type="sequence caution" evidence="12">
    <conflict type="erroneous initiation">
        <sequence resource="EMBL-CDS" id="BAC28053"/>
    </conflict>
</comment>
<comment type="sequence caution" evidence="12">
    <conflict type="erroneous initiation">
        <sequence resource="EMBL-CDS" id="BAC97927"/>
    </conflict>
</comment>
<keyword id="KW-0002">3D-structure</keyword>
<keyword id="KW-0007">Acetylation</keyword>
<keyword id="KW-0025">Alternative splicing</keyword>
<keyword id="KW-0053">Apoptosis</keyword>
<keyword id="KW-0963">Cytoplasm</keyword>
<keyword id="KW-0206">Cytoskeleton</keyword>
<keyword id="KW-0903">Direct protein sequencing</keyword>
<keyword id="KW-1017">Isopeptide bond</keyword>
<keyword id="KW-0479">Metal-binding</keyword>
<keyword id="KW-0488">Methylation</keyword>
<keyword id="KW-0539">Nucleus</keyword>
<keyword id="KW-0597">Phosphoprotein</keyword>
<keyword id="KW-1185">Reference proteome</keyword>
<keyword id="KW-0832">Ubl conjugation</keyword>
<keyword id="KW-0862">Zinc</keyword>
<keyword id="KW-0863">Zinc-finger</keyword>
<name>DIDO1_MOUSE</name>
<sequence length="2256" mass="247176">MDDKGHLSNEEAPKAIKPTSKEFRKTWGFRRTTIAKREGAGDTEVDPSEQQPQQHNLSLRRSGRQPKRTERVEEFLTTVRRRGKKNVPVSLEDSSEPTSSTVTDVETASEGSVESSSEIRSGPVSDSLGKEHPASSEKAKGGEEEEDTSDSDSDGLTLKELQNRLRRKREQEPVERSLRGSQNRLRKKRREEDSAETGSVQIGSAEQDRPLCKQEPEASQGPVSQSETDDIENQLEGKATQGNTEENPREAGKPKPECEVYDPNALYCICRQPHNNRFMICCDRCEEWFHGDCVGISEARGRLLERNGEDYICPNCTILQVQDETNGSATDEQDSGCRSVGADGTDCTSIGTVEQKSGEDQGIKGRIEKAANPSGKKKLKIFQPVVEAPGAPKCIGPGCSSVAQPDSVYCSNDCILKHAAATMRFLSSGKEQKTKPKEKVKTKPEKFSLPKCSVQVGIKISSVHKRLASEKRENPVKKVMLASRSETSGKEAACESSTPSWASDHNYNAVKPEKPEKPTALSPTLLSKSMKDDRRVEDRTMAAVTIPKKALPSASLVGRQTSPRNLVPKKLPPYSNMAGAKPAIKKLPSGFKGTIPKRPWPSATLSGTSARQAGPTPMTAASKKLPGSAAVVGVTRKPMSANVPAASPAPGRLGPVSPAPSQPNSQIRQNIRRSLKEILWKRVNDSDDLIMTENEVGKIALHIEKEMFNLFQVTDNRYKSKYRSIMFNLKDPKNQGLFHRVLREEISLAKLVRMKPEELVSKELSMWTEKPTKSVIESRTKLLNESKKNTTKPETIPDMEDSPPVSDSEEQQESVRAAPEKSAAPLLDVFSSMLKDTTSQHRAHLFDLNCKICTGQVPSSEDEPAPKKQKLSASSKKEDFKPRHDSSPPNAVPNTADEGIADTLPENASEPDPESTSSLNQERKCFPESPGDSHPEPSSLGGLSPSSASGGSGVVTTVTMSGRDPRTALSGSCTVTASMAAHLDNSQASETKLDMIKPALTSAVVPKSILAKPSSSPDPRYLSVPPSPSISESRSPPEGDTTLFLSRLNTIWKGFINMQSVAKFVTKAYPVSGCLDYLSEDLPDTIHIGGRIAPKTVWDYVGKLKSSVSKELCLIRFHPATEEEEVAYISLYSYFSSRGRFGVVANNNRHVKDLYLIPLSAKDPVPSKLLPFEGPGLESPRPNIILGLVICQKVKRPSSAGELDKTDEKRTRLQQEELETSVYPKVTAALPSEKKPPKYSVHSIDTAATSTTPPGSPPPPPPLPEPPVLKILSSLKPGSTSTVTAPTTAAITTTASPVTAATSKTASPLEHILQTLFGKKKSFEPSGKESVGSTLSPHQDSKAKGEDTMSAAPLLDPIVQQFGQFSKDKALEEEEEDDRPYDPEEEYNPDRAFHTLLAEPGRPHDVQSVSETAEREEVAYDPEDETILEEAKVTIDDLPNRMCMKVSATERPADFTTDASSASLVEQQKMLEELNKQIEEQKRQLEEQEEALRQQRAAVGVSMAHFSVSDALMSPPPKSSLGKTELFSQEQQAPDPSQGAPNTNHNLDSRQSRDPRQARRLAAENTENESLPRAPTGSTPGPQGTLPARETPAGTAVVQGPGLAAEAKESMAVPWAPGENAVLRPEHDIQKCEHPGNPVSLPLDTSHLPTAGDGAARPAPPRRVLLPTPPSTTFPPSFPLQPKAQNFSSGSREPFSGPTFMSQETSLGSSQYEDPRGAQSAGKNDSPVADMEDSREPQPRPGESTTSFPQPGQRGGGPQPQFPGQREPAPRTFGMSGHHGPSFPGPRGPVPPYSEENLVPNSDGPRGPPPARFGAQKPPIPSLFSGQHGPPPYGDNRGLSPSYLGGPRGGAPAQFEDRKDPHGEKREFQDTPYNEMTGAPAQCEGPDQAQFMGNRAPFQFGGQRRPLLTQMKGPRGGPPPSQFGAQRGPPPGHFVGPRGPHPSQFENSRGTHPGQFEGARGQAPGFMPGPRGIQPQQFEEQRVNSPPRFAGQRASAPLPYGGPRGPAPFPEKNEQPPSRFHFQGPSSQPVKPPPRPLLELPSHPPQHRKDRWDEAGPATALPSSAGPGQGHEADGQWATSEFREGKGHEYRSPAFEGRQRERFEAGSKEKPLDEPEAQGLESRQGRAFEDRRRERERGRNWSRERDWERSRDWDRHREWDKGRDRSSNRDRERDNDRAKEWDRSRERSRNRDRDRERRRDRDRSRSRDRDRDRERARDRDRDRGRDRKDRSKSRESPRDQKPEARTSEGGPAAAQA</sequence>
<gene>
    <name type="primary">Dido1</name>
    <name type="synonym">Datf1</name>
    <name type="synonym">Dio1</name>
</gene>
<organism>
    <name type="scientific">Mus musculus</name>
    <name type="common">Mouse</name>
    <dbReference type="NCBI Taxonomy" id="10090"/>
    <lineage>
        <taxon>Eukaryota</taxon>
        <taxon>Metazoa</taxon>
        <taxon>Chordata</taxon>
        <taxon>Craniata</taxon>
        <taxon>Vertebrata</taxon>
        <taxon>Euteleostomi</taxon>
        <taxon>Mammalia</taxon>
        <taxon>Eutheria</taxon>
        <taxon>Euarchontoglires</taxon>
        <taxon>Glires</taxon>
        <taxon>Rodentia</taxon>
        <taxon>Myomorpha</taxon>
        <taxon>Muroidea</taxon>
        <taxon>Muridae</taxon>
        <taxon>Murinae</taxon>
        <taxon>Mus</taxon>
        <taxon>Mus</taxon>
    </lineage>
</organism>
<reference key="1">
    <citation type="journal article" date="1999" name="Proc. Natl. Acad. Sci. U.S.A.">
        <title>DIO-1 is a novel gene involved in onset of apoptosis in vitro, whose misexpression disrupts limb development.</title>
        <authorList>
            <person name="Garcia-Domingo D."/>
            <person name="Leonardo E."/>
            <person name="Grandien A."/>
            <person name="Martinez P."/>
            <person name="Albar J.P."/>
            <person name="Izpisua-Belmonte J.-C."/>
            <person name="Martinez-A C."/>
        </authorList>
    </citation>
    <scope>NUCLEOTIDE SEQUENCE [MRNA] (ISOFORM 2)</scope>
    <scope>CHARACTERIZATION</scope>
    <source>
        <tissue>Pre-B cell</tissue>
    </source>
</reference>
<reference key="2">
    <citation type="journal article" date="2005" name="J. Clin. Invest.">
        <title>Dido gene expression alterations are implicated in the induction of hematological myeloid neoplasms.</title>
        <authorList>
            <person name="Futterer A."/>
            <person name="Campanero M.R."/>
            <person name="Leonardo E."/>
            <person name="Criado L.M."/>
            <person name="Flores J.M."/>
            <person name="Hernandez J.M."/>
            <person name="San Miguel J.F."/>
            <person name="Martinez-A C."/>
        </authorList>
    </citation>
    <scope>NUCLEOTIDE SEQUENCE [MRNA] (ISOFORMS 1 AND 3)</scope>
</reference>
<reference key="3">
    <citation type="journal article" date="2003" name="DNA Res.">
        <title>Prediction of the coding sequences of mouse homologues of KIAA gene: III. The complete nucleotide sequences of 500 mouse KIAA-homologous cDNAs identified by screening of terminal sequences of cDNA clones randomly sampled from size-fractionated libraries.</title>
        <authorList>
            <person name="Okazaki N."/>
            <person name="Kikuno R."/>
            <person name="Ohara R."/>
            <person name="Inamoto S."/>
            <person name="Koseki H."/>
            <person name="Hiraoka S."/>
            <person name="Saga Y."/>
            <person name="Nagase T."/>
            <person name="Ohara O."/>
            <person name="Koga H."/>
        </authorList>
    </citation>
    <scope>NUCLEOTIDE SEQUENCE [LARGE SCALE MRNA] (ISOFORM 3)</scope>
    <source>
        <tissue>Brain</tissue>
    </source>
</reference>
<reference key="4">
    <citation type="journal article" date="2005" name="Science">
        <title>The transcriptional landscape of the mammalian genome.</title>
        <authorList>
            <person name="Carninci P."/>
            <person name="Kasukawa T."/>
            <person name="Katayama S."/>
            <person name="Gough J."/>
            <person name="Frith M.C."/>
            <person name="Maeda N."/>
            <person name="Oyama R."/>
            <person name="Ravasi T."/>
            <person name="Lenhard B."/>
            <person name="Wells C."/>
            <person name="Kodzius R."/>
            <person name="Shimokawa K."/>
            <person name="Bajic V.B."/>
            <person name="Brenner S.E."/>
            <person name="Batalov S."/>
            <person name="Forrest A.R."/>
            <person name="Zavolan M."/>
            <person name="Davis M.J."/>
            <person name="Wilming L.G."/>
            <person name="Aidinis V."/>
            <person name="Allen J.E."/>
            <person name="Ambesi-Impiombato A."/>
            <person name="Apweiler R."/>
            <person name="Aturaliya R.N."/>
            <person name="Bailey T.L."/>
            <person name="Bansal M."/>
            <person name="Baxter L."/>
            <person name="Beisel K.W."/>
            <person name="Bersano T."/>
            <person name="Bono H."/>
            <person name="Chalk A.M."/>
            <person name="Chiu K.P."/>
            <person name="Choudhary V."/>
            <person name="Christoffels A."/>
            <person name="Clutterbuck D.R."/>
            <person name="Crowe M.L."/>
            <person name="Dalla E."/>
            <person name="Dalrymple B.P."/>
            <person name="de Bono B."/>
            <person name="Della Gatta G."/>
            <person name="di Bernardo D."/>
            <person name="Down T."/>
            <person name="Engstrom P."/>
            <person name="Fagiolini M."/>
            <person name="Faulkner G."/>
            <person name="Fletcher C.F."/>
            <person name="Fukushima T."/>
            <person name="Furuno M."/>
            <person name="Futaki S."/>
            <person name="Gariboldi M."/>
            <person name="Georgii-Hemming P."/>
            <person name="Gingeras T.R."/>
            <person name="Gojobori T."/>
            <person name="Green R.E."/>
            <person name="Gustincich S."/>
            <person name="Harbers M."/>
            <person name="Hayashi Y."/>
            <person name="Hensch T.K."/>
            <person name="Hirokawa N."/>
            <person name="Hill D."/>
            <person name="Huminiecki L."/>
            <person name="Iacono M."/>
            <person name="Ikeo K."/>
            <person name="Iwama A."/>
            <person name="Ishikawa T."/>
            <person name="Jakt M."/>
            <person name="Kanapin A."/>
            <person name="Katoh M."/>
            <person name="Kawasawa Y."/>
            <person name="Kelso J."/>
            <person name="Kitamura H."/>
            <person name="Kitano H."/>
            <person name="Kollias G."/>
            <person name="Krishnan S.P."/>
            <person name="Kruger A."/>
            <person name="Kummerfeld S.K."/>
            <person name="Kurochkin I.V."/>
            <person name="Lareau L.F."/>
            <person name="Lazarevic D."/>
            <person name="Lipovich L."/>
            <person name="Liu J."/>
            <person name="Liuni S."/>
            <person name="McWilliam S."/>
            <person name="Madan Babu M."/>
            <person name="Madera M."/>
            <person name="Marchionni L."/>
            <person name="Matsuda H."/>
            <person name="Matsuzawa S."/>
            <person name="Miki H."/>
            <person name="Mignone F."/>
            <person name="Miyake S."/>
            <person name="Morris K."/>
            <person name="Mottagui-Tabar S."/>
            <person name="Mulder N."/>
            <person name="Nakano N."/>
            <person name="Nakauchi H."/>
            <person name="Ng P."/>
            <person name="Nilsson R."/>
            <person name="Nishiguchi S."/>
            <person name="Nishikawa S."/>
            <person name="Nori F."/>
            <person name="Ohara O."/>
            <person name="Okazaki Y."/>
            <person name="Orlando V."/>
            <person name="Pang K.C."/>
            <person name="Pavan W.J."/>
            <person name="Pavesi G."/>
            <person name="Pesole G."/>
            <person name="Petrovsky N."/>
            <person name="Piazza S."/>
            <person name="Reed J."/>
            <person name="Reid J.F."/>
            <person name="Ring B.Z."/>
            <person name="Ringwald M."/>
            <person name="Rost B."/>
            <person name="Ruan Y."/>
            <person name="Salzberg S.L."/>
            <person name="Sandelin A."/>
            <person name="Schneider C."/>
            <person name="Schoenbach C."/>
            <person name="Sekiguchi K."/>
            <person name="Semple C.A."/>
            <person name="Seno S."/>
            <person name="Sessa L."/>
            <person name="Sheng Y."/>
            <person name="Shibata Y."/>
            <person name="Shimada H."/>
            <person name="Shimada K."/>
            <person name="Silva D."/>
            <person name="Sinclair B."/>
            <person name="Sperling S."/>
            <person name="Stupka E."/>
            <person name="Sugiura K."/>
            <person name="Sultana R."/>
            <person name="Takenaka Y."/>
            <person name="Taki K."/>
            <person name="Tammoja K."/>
            <person name="Tan S.L."/>
            <person name="Tang S."/>
            <person name="Taylor M.S."/>
            <person name="Tegner J."/>
            <person name="Teichmann S.A."/>
            <person name="Ueda H.R."/>
            <person name="van Nimwegen E."/>
            <person name="Verardo R."/>
            <person name="Wei C.L."/>
            <person name="Yagi K."/>
            <person name="Yamanishi H."/>
            <person name="Zabarovsky E."/>
            <person name="Zhu S."/>
            <person name="Zimmer A."/>
            <person name="Hide W."/>
            <person name="Bult C."/>
            <person name="Grimmond S.M."/>
            <person name="Teasdale R.D."/>
            <person name="Liu E.T."/>
            <person name="Brusic V."/>
            <person name="Quackenbush J."/>
            <person name="Wahlestedt C."/>
            <person name="Mattick J.S."/>
            <person name="Hume D.A."/>
            <person name="Kai C."/>
            <person name="Sasaki D."/>
            <person name="Tomaru Y."/>
            <person name="Fukuda S."/>
            <person name="Kanamori-Katayama M."/>
            <person name="Suzuki M."/>
            <person name="Aoki J."/>
            <person name="Arakawa T."/>
            <person name="Iida J."/>
            <person name="Imamura K."/>
            <person name="Itoh M."/>
            <person name="Kato T."/>
            <person name="Kawaji H."/>
            <person name="Kawagashira N."/>
            <person name="Kawashima T."/>
            <person name="Kojima M."/>
            <person name="Kondo S."/>
            <person name="Konno H."/>
            <person name="Nakano K."/>
            <person name="Ninomiya N."/>
            <person name="Nishio T."/>
            <person name="Okada M."/>
            <person name="Plessy C."/>
            <person name="Shibata K."/>
            <person name="Shiraki T."/>
            <person name="Suzuki S."/>
            <person name="Tagami M."/>
            <person name="Waki K."/>
            <person name="Watahiki A."/>
            <person name="Okamura-Oho Y."/>
            <person name="Suzuki H."/>
            <person name="Kawai J."/>
            <person name="Hayashizaki Y."/>
        </authorList>
    </citation>
    <scope>NUCLEOTIDE SEQUENCE [LARGE SCALE MRNA] (ISOFORM 2)</scope>
    <scope>NUCLEOTIDE SEQUENCE [LARGE SCALE MRNA] OF 1484-2256 (ISOFORM 1)</scope>
    <source>
        <strain>C57BL/6J</strain>
        <tissue>Embryo</tissue>
        <tissue>Thymus</tissue>
        <tissue>Wolffian duct</tissue>
    </source>
</reference>
<reference key="5">
    <citation type="journal article" date="2009" name="PLoS Biol.">
        <title>Lineage-specific biology revealed by a finished genome assembly of the mouse.</title>
        <authorList>
            <person name="Church D.M."/>
            <person name="Goodstadt L."/>
            <person name="Hillier L.W."/>
            <person name="Zody M.C."/>
            <person name="Goldstein S."/>
            <person name="She X."/>
            <person name="Bult C.J."/>
            <person name="Agarwala R."/>
            <person name="Cherry J.L."/>
            <person name="DiCuccio M."/>
            <person name="Hlavina W."/>
            <person name="Kapustin Y."/>
            <person name="Meric P."/>
            <person name="Maglott D."/>
            <person name="Birtle Z."/>
            <person name="Marques A.C."/>
            <person name="Graves T."/>
            <person name="Zhou S."/>
            <person name="Teague B."/>
            <person name="Potamousis K."/>
            <person name="Churas C."/>
            <person name="Place M."/>
            <person name="Herschleb J."/>
            <person name="Runnheim R."/>
            <person name="Forrest D."/>
            <person name="Amos-Landgraf J."/>
            <person name="Schwartz D.C."/>
            <person name="Cheng Z."/>
            <person name="Lindblad-Toh K."/>
            <person name="Eichler E.E."/>
            <person name="Ponting C.P."/>
        </authorList>
    </citation>
    <scope>NUCLEOTIDE SEQUENCE [LARGE SCALE GENOMIC DNA]</scope>
    <source>
        <strain>C57BL/6J</strain>
    </source>
</reference>
<reference key="6">
    <citation type="journal article" date="2004" name="Genome Res.">
        <title>The status, quality, and expansion of the NIH full-length cDNA project: the Mammalian Gene Collection (MGC).</title>
        <authorList>
            <consortium name="The MGC Project Team"/>
        </authorList>
    </citation>
    <scope>NUCLEOTIDE SEQUENCE [LARGE SCALE MRNA] (ISOFORMS 2 AND 3)</scope>
    <source>
        <strain>C57BL/6J</strain>
        <strain>FVB/N</strain>
        <tissue>Brain</tissue>
        <tissue>Mammary gland</tissue>
        <tissue>Mammary tumor</tissue>
    </source>
</reference>
<reference key="7">
    <citation type="submission" date="2007-04" db="UniProtKB">
        <authorList>
            <person name="Lubec G."/>
            <person name="Kang S.U."/>
        </authorList>
    </citation>
    <scope>PROTEIN SEQUENCE OF 540-548 AND 699-705</scope>
    <scope>IDENTIFICATION BY MASS SPECTROMETRY</scope>
    <source>
        <strain>C57BL/6J</strain>
        <tissue>Brain</tissue>
    </source>
</reference>
<reference key="8">
    <citation type="journal article" date="2007" name="Proc. Natl. Acad. Sci. U.S.A.">
        <title>Large-scale phosphorylation analysis of mouse liver.</title>
        <authorList>
            <person name="Villen J."/>
            <person name="Beausoleil S.A."/>
            <person name="Gerber S.A."/>
            <person name="Gygi S.P."/>
        </authorList>
    </citation>
    <scope>PHOSPHORYLATION [LARGE SCALE ANALYSIS] AT SER-802</scope>
    <scope>IDENTIFICATION BY MASS SPECTROMETRY [LARGE SCALE ANALYSIS]</scope>
    <source>
        <tissue>Liver</tissue>
    </source>
</reference>
<reference key="9">
    <citation type="journal article" date="2010" name="Cell">
        <title>A tissue-specific atlas of mouse protein phosphorylation and expression.</title>
        <authorList>
            <person name="Huttlin E.L."/>
            <person name="Jedrychowski M.P."/>
            <person name="Elias J.E."/>
            <person name="Goswami T."/>
            <person name="Rad R."/>
            <person name="Beausoleil S.A."/>
            <person name="Villen J."/>
            <person name="Haas W."/>
            <person name="Sowa M.E."/>
            <person name="Gygi S.P."/>
        </authorList>
    </citation>
    <scope>PHOSPHORYLATION [LARGE SCALE ANALYSIS] AT SER-112; THR-148; SER-149; SER-802; SER-806; SER-886; SER-1016; SER-1035; THR-1252 AND SER-1256</scope>
    <scope>IDENTIFICATION BY MASS SPECTROMETRY [LARGE SCALE ANALYSIS]</scope>
    <source>
        <tissue>Brain</tissue>
        <tissue>Brown adipose tissue</tissue>
        <tissue>Heart</tissue>
        <tissue>Kidney</tissue>
        <tissue>Liver</tissue>
        <tissue>Lung</tissue>
        <tissue>Pancreas</tissue>
        <tissue>Spleen</tissue>
        <tissue>Testis</tissue>
    </source>
</reference>
<reference key="10">
    <citation type="journal article" date="2014" name="Mol. Cell. Proteomics">
        <title>Immunoaffinity enrichment and mass spectrometry analysis of protein methylation.</title>
        <authorList>
            <person name="Guo A."/>
            <person name="Gu H."/>
            <person name="Zhou J."/>
            <person name="Mulhern D."/>
            <person name="Wang Y."/>
            <person name="Lee K.A."/>
            <person name="Yang V."/>
            <person name="Aguiar M."/>
            <person name="Kornhauser J."/>
            <person name="Jia X."/>
            <person name="Ren J."/>
            <person name="Beausoleil S.A."/>
            <person name="Silva J.C."/>
            <person name="Vemulapalli V."/>
            <person name="Bedford M.T."/>
            <person name="Comb M.J."/>
        </authorList>
    </citation>
    <scope>IDENTIFICATION BY MASS SPECTROMETRY [LARGE SCALE ANALYSIS]</scope>
    <source>
        <tissue>Brain</tissue>
    </source>
</reference>
<reference key="11">
    <citation type="submission" date="2004-11" db="PDB data bank">
        <title>Solution structure of PHD domain in death inducer-obliterator 1(DIO-1).</title>
        <authorList>
            <consortium name="RIKEN structural genomics initiative (RSGI)"/>
        </authorList>
    </citation>
    <scope>STRUCTURE BY NMR OF 257-319</scope>
</reference>
<evidence type="ECO:0000250" key="1"/>
<evidence type="ECO:0000250" key="2">
    <source>
        <dbReference type="UniProtKB" id="Q9BTC0"/>
    </source>
</evidence>
<evidence type="ECO:0000255" key="3"/>
<evidence type="ECO:0000255" key="4">
    <source>
        <dbReference type="PROSITE-ProRule" id="PRU00146"/>
    </source>
</evidence>
<evidence type="ECO:0000255" key="5">
    <source>
        <dbReference type="PROSITE-ProRule" id="PRU00651"/>
    </source>
</evidence>
<evidence type="ECO:0000256" key="6">
    <source>
        <dbReference type="SAM" id="MobiDB-lite"/>
    </source>
</evidence>
<evidence type="ECO:0000303" key="7">
    <source>
    </source>
</evidence>
<evidence type="ECO:0000303" key="8">
    <source>
    </source>
</evidence>
<evidence type="ECO:0000303" key="9">
    <source>
    </source>
</evidence>
<evidence type="ECO:0000303" key="10">
    <source>
    </source>
</evidence>
<evidence type="ECO:0000303" key="11">
    <source>
    </source>
</evidence>
<evidence type="ECO:0000305" key="12"/>
<evidence type="ECO:0007744" key="13">
    <source>
    </source>
</evidence>
<evidence type="ECO:0007744" key="14">
    <source>
    </source>
</evidence>
<evidence type="ECO:0007829" key="15">
    <source>
        <dbReference type="PDB" id="1WEM"/>
    </source>
</evidence>
<feature type="chain" id="PRO_0000059325" description="Death-inducer obliterator 1">
    <location>
        <begin position="1"/>
        <end position="2256"/>
    </location>
</feature>
<feature type="domain" description="TFIIS central" evidence="5">
    <location>
        <begin position="667"/>
        <end position="787"/>
    </location>
</feature>
<feature type="zinc finger region" description="PHD-type" evidence="4">
    <location>
        <begin position="265"/>
        <end position="319"/>
    </location>
</feature>
<feature type="region of interest" description="Disordered" evidence="6">
    <location>
        <begin position="1"/>
        <end position="256"/>
    </location>
</feature>
<feature type="region of interest" description="Disordered" evidence="6">
    <location>
        <begin position="481"/>
        <end position="535"/>
    </location>
</feature>
<feature type="region of interest" description="Disordered" evidence="6">
    <location>
        <begin position="598"/>
        <end position="624"/>
    </location>
</feature>
<feature type="region of interest" description="Disordered" evidence="6">
    <location>
        <begin position="641"/>
        <end position="668"/>
    </location>
</feature>
<feature type="region of interest" description="Disordered" evidence="6">
    <location>
        <begin position="778"/>
        <end position="822"/>
    </location>
</feature>
<feature type="region of interest" description="Disordered" evidence="6">
    <location>
        <begin position="856"/>
        <end position="970"/>
    </location>
</feature>
<feature type="region of interest" description="Disordered" evidence="6">
    <location>
        <begin position="1011"/>
        <end position="1039"/>
    </location>
</feature>
<feature type="region of interest" description="Disordered" evidence="6">
    <location>
        <begin position="1197"/>
        <end position="1218"/>
    </location>
</feature>
<feature type="region of interest" description="Disordered" evidence="6">
    <location>
        <begin position="1245"/>
        <end position="1288"/>
    </location>
</feature>
<feature type="region of interest" description="Disordered" evidence="6">
    <location>
        <begin position="1320"/>
        <end position="1347"/>
    </location>
</feature>
<feature type="region of interest" description="Disordered" evidence="6">
    <location>
        <begin position="1362"/>
        <end position="1421"/>
    </location>
</feature>
<feature type="region of interest" description="Disordered" evidence="6">
    <location>
        <begin position="1509"/>
        <end position="1609"/>
    </location>
</feature>
<feature type="region of interest" description="Disordered" evidence="6">
    <location>
        <begin position="1630"/>
        <end position="2256"/>
    </location>
</feature>
<feature type="short sequence motif" description="Nuclear localization signal" evidence="3">
    <location>
        <begin position="162"/>
        <end position="170"/>
    </location>
</feature>
<feature type="short sequence motif" description="Nuclear localization signal" evidence="3">
    <location>
        <begin position="182"/>
        <end position="190"/>
    </location>
</feature>
<feature type="compositionally biased region" description="Basic and acidic residues" evidence="6">
    <location>
        <begin position="1"/>
        <end position="25"/>
    </location>
</feature>
<feature type="compositionally biased region" description="Polar residues" evidence="6">
    <location>
        <begin position="48"/>
        <end position="59"/>
    </location>
</feature>
<feature type="compositionally biased region" description="Polar residues" evidence="6">
    <location>
        <begin position="96"/>
        <end position="119"/>
    </location>
</feature>
<feature type="compositionally biased region" description="Basic and acidic residues" evidence="6">
    <location>
        <begin position="128"/>
        <end position="142"/>
    </location>
</feature>
<feature type="compositionally biased region" description="Acidic residues" evidence="6">
    <location>
        <begin position="143"/>
        <end position="153"/>
    </location>
</feature>
<feature type="compositionally biased region" description="Basic and acidic residues" evidence="6">
    <location>
        <begin position="169"/>
        <end position="178"/>
    </location>
</feature>
<feature type="compositionally biased region" description="Basic and acidic residues" evidence="6">
    <location>
        <begin position="206"/>
        <end position="216"/>
    </location>
</feature>
<feature type="compositionally biased region" description="Basic and acidic residues" evidence="6">
    <location>
        <begin position="246"/>
        <end position="256"/>
    </location>
</feature>
<feature type="compositionally biased region" description="Polar residues" evidence="6">
    <location>
        <begin position="495"/>
        <end position="506"/>
    </location>
</feature>
<feature type="compositionally biased region" description="Basic and acidic residues" evidence="6">
    <location>
        <begin position="778"/>
        <end position="788"/>
    </location>
</feature>
<feature type="compositionally biased region" description="Acidic residues" evidence="6">
    <location>
        <begin position="797"/>
        <end position="812"/>
    </location>
</feature>
<feature type="compositionally biased region" description="Basic and acidic residues" evidence="6">
    <location>
        <begin position="875"/>
        <end position="886"/>
    </location>
</feature>
<feature type="compositionally biased region" description="Basic and acidic residues" evidence="6">
    <location>
        <begin position="921"/>
        <end position="935"/>
    </location>
</feature>
<feature type="compositionally biased region" description="Low complexity" evidence="6">
    <location>
        <begin position="937"/>
        <end position="962"/>
    </location>
</feature>
<feature type="compositionally biased region" description="Basic and acidic residues" evidence="6">
    <location>
        <begin position="1202"/>
        <end position="1215"/>
    </location>
</feature>
<feature type="compositionally biased region" description="Pro residues" evidence="6">
    <location>
        <begin position="1254"/>
        <end position="1267"/>
    </location>
</feature>
<feature type="compositionally biased region" description="Low complexity" evidence="6">
    <location>
        <begin position="1279"/>
        <end position="1288"/>
    </location>
</feature>
<feature type="compositionally biased region" description="Acidic residues" evidence="6">
    <location>
        <begin position="1371"/>
        <end position="1387"/>
    </location>
</feature>
<feature type="compositionally biased region" description="Polar residues" evidence="6">
    <location>
        <begin position="1526"/>
        <end position="1546"/>
    </location>
</feature>
<feature type="compositionally biased region" description="Basic and acidic residues" evidence="6">
    <location>
        <begin position="1547"/>
        <end position="1557"/>
    </location>
</feature>
<feature type="compositionally biased region" description="Low complexity" evidence="6">
    <location>
        <begin position="1649"/>
        <end position="1666"/>
    </location>
</feature>
<feature type="compositionally biased region" description="Pro residues" evidence="6">
    <location>
        <begin position="1667"/>
        <end position="1679"/>
    </location>
</feature>
<feature type="compositionally biased region" description="Polar residues" evidence="6">
    <location>
        <begin position="1699"/>
        <end position="1712"/>
    </location>
</feature>
<feature type="compositionally biased region" description="Pro residues" evidence="6">
    <location>
        <begin position="1783"/>
        <end position="1792"/>
    </location>
</feature>
<feature type="compositionally biased region" description="Basic and acidic residues" evidence="6">
    <location>
        <begin position="1855"/>
        <end position="1869"/>
    </location>
</feature>
<feature type="compositionally biased region" description="Basic and acidic residues" evidence="6">
    <location>
        <begin position="2081"/>
        <end position="2113"/>
    </location>
</feature>
<feature type="compositionally biased region" description="Basic and acidic residues" evidence="6">
    <location>
        <begin position="2123"/>
        <end position="2246"/>
    </location>
</feature>
<feature type="modified residue" description="N-acetylmethionine" evidence="2">
    <location>
        <position position="1"/>
    </location>
</feature>
<feature type="modified residue" description="Phosphoserine" evidence="2">
    <location>
        <position position="58"/>
    </location>
</feature>
<feature type="modified residue" description="Phosphoserine" evidence="14">
    <location>
        <position position="112"/>
    </location>
</feature>
<feature type="modified residue" description="Phosphothreonine" evidence="14">
    <location>
        <position position="148"/>
    </location>
</feature>
<feature type="modified residue" description="Phosphoserine" evidence="14">
    <location>
        <position position="149"/>
    </location>
</feature>
<feature type="modified residue" description="Phosphoserine" evidence="2">
    <location>
        <position position="151"/>
    </location>
</feature>
<feature type="modified residue" description="Phosphoserine" evidence="2">
    <location>
        <position position="522"/>
    </location>
</feature>
<feature type="modified residue" description="Phosphoserine" evidence="13 14">
    <location>
        <position position="802"/>
    </location>
</feature>
<feature type="modified residue" description="Phosphoserine" evidence="14">
    <location>
        <position position="806"/>
    </location>
</feature>
<feature type="modified residue" description="Phosphoserine" evidence="14">
    <location>
        <position position="886"/>
    </location>
</feature>
<feature type="modified residue" description="Phosphoserine" evidence="14">
    <location>
        <position position="1016"/>
    </location>
</feature>
<feature type="modified residue" description="Phosphoserine" evidence="2">
    <location>
        <position position="1027"/>
    </location>
</feature>
<feature type="modified residue" description="Phosphoserine" evidence="14">
    <location>
        <position position="1035"/>
    </location>
</feature>
<feature type="modified residue" description="Phosphotyrosine" evidence="2">
    <location>
        <position position="1239"/>
    </location>
</feature>
<feature type="modified residue" description="Phosphothreonine" evidence="14">
    <location>
        <position position="1252"/>
    </location>
</feature>
<feature type="modified residue" description="Phosphoserine" evidence="14">
    <location>
        <position position="1256"/>
    </location>
</feature>
<feature type="modified residue" description="Phosphoserine" evidence="2">
    <location>
        <position position="1307"/>
    </location>
</feature>
<feature type="modified residue" description="Phosphoserine" evidence="2">
    <location>
        <position position="1514"/>
    </location>
</feature>
<feature type="modified residue" description="Phosphoserine" evidence="2">
    <location>
        <position position="1726"/>
    </location>
</feature>
<feature type="modified residue" description="Omega-N-methylarginine" evidence="2">
    <location>
        <position position="1848"/>
    </location>
</feature>
<feature type="modified residue" description="Asymmetric dimethylarginine" evidence="2">
    <location>
        <position position="1904"/>
    </location>
</feature>
<feature type="modified residue" description="Asymmetric dimethylarginine" evidence="2">
    <location>
        <position position="1905"/>
    </location>
</feature>
<feature type="modified residue" description="Asymmetric dimethylarginine" evidence="2">
    <location>
        <position position="1988"/>
    </location>
</feature>
<feature type="modified residue" description="Asymmetric dimethylarginine" evidence="2">
    <location>
        <position position="1993"/>
    </location>
</feature>
<feature type="modified residue" description="Asymmetric dimethylarginine" evidence="2">
    <location>
        <position position="2004"/>
    </location>
</feature>
<feature type="modified residue" description="Asymmetric dimethylarginine" evidence="2">
    <location>
        <position position="2019"/>
    </location>
</feature>
<feature type="modified residue" description="Asymmetric dimethylarginine" evidence="2">
    <location>
        <position position="2035"/>
    </location>
</feature>
<feature type="cross-link" description="Glycyl lysine isopeptide (Lys-Gly) (interchain with G-Cter in SUMO2)" evidence="2">
    <location>
        <position position="876"/>
    </location>
</feature>
<feature type="splice variant" id="VSP_012363" description="In isoform 2." evidence="7 9 11">
    <original>SMKDDRRVEDRTMAAVTIPKKALPSASLVGRQTSPRNLVPKKLPPYSNMAGAKPAIKKLPSGFKGTIPKRPWPSATLSGTSARQAG</original>
    <variation>CTYHPKAGFPGPSHHLGGCLGLSRTRVLGVLVLIVASSSLPARSRYQDASGPQVFLPSLWSLSGWFLKSCVGLMLEAISYFSFRPW</variation>
    <location>
        <begin position="529"/>
        <end position="614"/>
    </location>
</feature>
<feature type="splice variant" id="VSP_012364" description="In isoform 2." evidence="7 9 11">
    <location>
        <begin position="615"/>
        <end position="2256"/>
    </location>
</feature>
<feature type="splice variant" id="VSP_026606" description="In isoform 3." evidence="8 9 10">
    <original>LESPRPN</original>
    <variation>KHPVSGR</variation>
    <location>
        <begin position="1177"/>
        <end position="1183"/>
    </location>
</feature>
<feature type="splice variant" id="VSP_026607" description="In isoform 3." evidence="8 9 10">
    <location>
        <begin position="1184"/>
        <end position="2256"/>
    </location>
</feature>
<feature type="sequence conflict" description="In Ref. 1; CAB48401." evidence="12" ref="1">
    <original>V</original>
    <variation>A</variation>
    <location>
        <position position="45"/>
    </location>
</feature>
<feature type="sequence conflict" description="In Ref. 1; CAB48401." evidence="12" ref="1">
    <original>D</original>
    <variation>N</variation>
    <location>
        <position position="331"/>
    </location>
</feature>
<feature type="sequence conflict" description="In Ref. 4; BAC31270." evidence="12" ref="4">
    <original>V</original>
    <variation>I</variation>
    <location>
        <position position="353"/>
    </location>
</feature>
<feature type="sequence conflict" description="In Ref. 6; AAH29110." evidence="12" ref="6">
    <original>P</original>
    <variation>K</variation>
    <location>
        <position position="436"/>
    </location>
</feature>
<feature type="sequence conflict" description="In Ref. 2; AAR84049/AAR84050." evidence="12" ref="2">
    <original>D</original>
    <variation>Y</variation>
    <location>
        <position position="688"/>
    </location>
</feature>
<feature type="sequence conflict" description="In Ref. 2; AAR84049/AAR84050." evidence="12" ref="2">
    <original>Y</original>
    <variation>F</variation>
    <location>
        <position position="718"/>
    </location>
</feature>
<feature type="sequence conflict" description="In Ref. 2; AAR84050." evidence="12" ref="2">
    <original>P</original>
    <variation>L</variation>
    <location>
        <position position="1739"/>
    </location>
</feature>
<feature type="sequence conflict" description="In Ref. 2; AAR84050." evidence="12" ref="2">
    <original>Q</original>
    <variation>H</variation>
    <location>
        <position position="2046"/>
    </location>
</feature>
<feature type="sequence conflict" description="In Ref. 2; AAR84050." evidence="12" ref="2">
    <original>K</original>
    <variation>T</variation>
    <location>
        <position position="2049"/>
    </location>
</feature>
<feature type="sequence conflict" description="In Ref. 2; AAR84050." evidence="12" ref="2">
    <original>E</original>
    <variation>K</variation>
    <location>
        <position position="2054"/>
    </location>
</feature>
<feature type="sequence conflict" description="In Ref. 2; AAR84050." evidence="12" ref="2">
    <original>A</original>
    <variation>P</variation>
    <location>
        <position position="2058"/>
    </location>
</feature>
<feature type="sequence conflict" description="In Ref. 4; BAC28053." evidence="12" ref="4">
    <original>Q</original>
    <variation>L</variation>
    <location>
        <position position="2118"/>
    </location>
</feature>
<feature type="strand" evidence="15">
    <location>
        <begin position="279"/>
        <end position="281"/>
    </location>
</feature>
<feature type="strand" evidence="15">
    <location>
        <begin position="283"/>
        <end position="285"/>
    </location>
</feature>
<feature type="strand" evidence="15">
    <location>
        <begin position="288"/>
        <end position="290"/>
    </location>
</feature>
<feature type="helix" evidence="15">
    <location>
        <begin position="291"/>
        <end position="294"/>
    </location>
</feature>
<feature type="helix" evidence="15">
    <location>
        <begin position="298"/>
        <end position="307"/>
    </location>
</feature>
<feature type="helix" evidence="15">
    <location>
        <begin position="314"/>
        <end position="319"/>
    </location>
</feature>